<organism>
    <name type="scientific">Aquifex aeolicus (strain VF5)</name>
    <dbReference type="NCBI Taxonomy" id="224324"/>
    <lineage>
        <taxon>Bacteria</taxon>
        <taxon>Pseudomonadati</taxon>
        <taxon>Aquificota</taxon>
        <taxon>Aquificia</taxon>
        <taxon>Aquificales</taxon>
        <taxon>Aquificaceae</taxon>
        <taxon>Aquifex</taxon>
    </lineage>
</organism>
<gene>
    <name evidence="1" type="primary">ndk</name>
    <name type="ordered locus">aq_1590</name>
</gene>
<name>NDK_AQUAE</name>
<accession>O67528</accession>
<comment type="function">
    <text evidence="1">Major role in the synthesis of nucleoside triphosphates other than ATP. The ATP gamma phosphate is transferred to the NDP beta phosphate via a ping-pong mechanism, using a phosphorylated active-site intermediate.</text>
</comment>
<comment type="catalytic activity">
    <reaction evidence="1">
        <text>a 2'-deoxyribonucleoside 5'-diphosphate + ATP = a 2'-deoxyribonucleoside 5'-triphosphate + ADP</text>
        <dbReference type="Rhea" id="RHEA:44640"/>
        <dbReference type="ChEBI" id="CHEBI:30616"/>
        <dbReference type="ChEBI" id="CHEBI:61560"/>
        <dbReference type="ChEBI" id="CHEBI:73316"/>
        <dbReference type="ChEBI" id="CHEBI:456216"/>
        <dbReference type="EC" id="2.7.4.6"/>
    </reaction>
</comment>
<comment type="catalytic activity">
    <reaction evidence="1">
        <text>a ribonucleoside 5'-diphosphate + ATP = a ribonucleoside 5'-triphosphate + ADP</text>
        <dbReference type="Rhea" id="RHEA:18113"/>
        <dbReference type="ChEBI" id="CHEBI:30616"/>
        <dbReference type="ChEBI" id="CHEBI:57930"/>
        <dbReference type="ChEBI" id="CHEBI:61557"/>
        <dbReference type="ChEBI" id="CHEBI:456216"/>
        <dbReference type="EC" id="2.7.4.6"/>
    </reaction>
</comment>
<comment type="cofactor">
    <cofactor evidence="1">
        <name>Mg(2+)</name>
        <dbReference type="ChEBI" id="CHEBI:18420"/>
    </cofactor>
</comment>
<comment type="subunit">
    <text evidence="1">Homotetramer.</text>
</comment>
<comment type="subcellular location">
    <subcellularLocation>
        <location evidence="1">Cytoplasm</location>
    </subcellularLocation>
</comment>
<comment type="similarity">
    <text evidence="1 2">Belongs to the NDK family.</text>
</comment>
<feature type="chain" id="PRO_0000136936" description="Nucleoside diphosphate kinase">
    <location>
        <begin position="1"/>
        <end position="142"/>
    </location>
</feature>
<feature type="active site" description="Pros-phosphohistidine intermediate" evidence="1">
    <location>
        <position position="120"/>
    </location>
</feature>
<feature type="binding site" evidence="1">
    <location>
        <position position="11"/>
    </location>
    <ligand>
        <name>ATP</name>
        <dbReference type="ChEBI" id="CHEBI:30616"/>
    </ligand>
</feature>
<feature type="binding site" evidence="1">
    <location>
        <position position="59"/>
    </location>
    <ligand>
        <name>ATP</name>
        <dbReference type="ChEBI" id="CHEBI:30616"/>
    </ligand>
</feature>
<feature type="binding site" evidence="1">
    <location>
        <position position="87"/>
    </location>
    <ligand>
        <name>ATP</name>
        <dbReference type="ChEBI" id="CHEBI:30616"/>
    </ligand>
</feature>
<feature type="binding site" evidence="1">
    <location>
        <position position="93"/>
    </location>
    <ligand>
        <name>ATP</name>
        <dbReference type="ChEBI" id="CHEBI:30616"/>
    </ligand>
</feature>
<feature type="binding site" evidence="1">
    <location>
        <position position="107"/>
    </location>
    <ligand>
        <name>ATP</name>
        <dbReference type="ChEBI" id="CHEBI:30616"/>
    </ligand>
</feature>
<feature type="binding site" evidence="1">
    <location>
        <position position="117"/>
    </location>
    <ligand>
        <name>ATP</name>
        <dbReference type="ChEBI" id="CHEBI:30616"/>
    </ligand>
</feature>
<feature type="strand" evidence="3">
    <location>
        <begin position="3"/>
        <end position="10"/>
    </location>
</feature>
<feature type="helix" evidence="3">
    <location>
        <begin position="12"/>
        <end position="17"/>
    </location>
</feature>
<feature type="helix" evidence="3">
    <location>
        <begin position="20"/>
        <end position="29"/>
    </location>
</feature>
<feature type="strand" evidence="3">
    <location>
        <begin position="33"/>
        <end position="40"/>
    </location>
</feature>
<feature type="helix" evidence="3">
    <location>
        <begin position="44"/>
        <end position="50"/>
    </location>
</feature>
<feature type="helix" evidence="3">
    <location>
        <begin position="52"/>
        <end position="54"/>
    </location>
</feature>
<feature type="helix" evidence="3">
    <location>
        <begin position="60"/>
        <end position="67"/>
    </location>
</feature>
<feature type="strand" evidence="3">
    <location>
        <begin position="72"/>
        <end position="80"/>
    </location>
</feature>
<feature type="helix" evidence="3">
    <location>
        <begin position="82"/>
        <end position="90"/>
    </location>
</feature>
<feature type="helix" evidence="3">
    <location>
        <begin position="95"/>
        <end position="101"/>
    </location>
</feature>
<feature type="helix" evidence="3">
    <location>
        <begin position="106"/>
        <end position="110"/>
    </location>
</feature>
<feature type="strand" evidence="3">
    <location>
        <begin position="113"/>
        <end position="116"/>
    </location>
</feature>
<feature type="strand" evidence="3">
    <location>
        <begin position="118"/>
        <end position="121"/>
    </location>
</feature>
<feature type="helix" evidence="3">
    <location>
        <begin position="125"/>
        <end position="135"/>
    </location>
</feature>
<feature type="helix" evidence="3">
    <location>
        <begin position="138"/>
        <end position="140"/>
    </location>
</feature>
<reference key="1">
    <citation type="journal article" date="1998" name="Nature">
        <title>The complete genome of the hyperthermophilic bacterium Aquifex aeolicus.</title>
        <authorList>
            <person name="Deckert G."/>
            <person name="Warren P.V."/>
            <person name="Gaasterland T."/>
            <person name="Young W.G."/>
            <person name="Lenox A.L."/>
            <person name="Graham D.E."/>
            <person name="Overbeek R."/>
            <person name="Snead M.A."/>
            <person name="Keller M."/>
            <person name="Aujay M."/>
            <person name="Huber R."/>
            <person name="Feldman R.A."/>
            <person name="Short J.M."/>
            <person name="Olsen G.J."/>
            <person name="Swanson R.V."/>
        </authorList>
    </citation>
    <scope>NUCLEOTIDE SEQUENCE [LARGE SCALE GENOMIC DNA]</scope>
    <source>
        <strain>VF5</strain>
    </source>
</reference>
<proteinExistence type="evidence at protein level"/>
<protein>
    <recommendedName>
        <fullName evidence="1">Nucleoside diphosphate kinase</fullName>
        <shortName evidence="1">NDK</shortName>
        <shortName evidence="1">NDP kinase</shortName>
        <ecNumber evidence="1">2.7.4.6</ecNumber>
    </recommendedName>
    <alternativeName>
        <fullName evidence="1">Nucleoside-2-P kinase</fullName>
    </alternativeName>
</protein>
<dbReference type="EC" id="2.7.4.6" evidence="1"/>
<dbReference type="EMBL" id="AE000657">
    <property type="protein sequence ID" value="AAC07481.1"/>
    <property type="molecule type" value="Genomic_DNA"/>
</dbReference>
<dbReference type="PIR" id="F70437">
    <property type="entry name" value="F70437"/>
</dbReference>
<dbReference type="RefSeq" id="NP_214093.1">
    <property type="nucleotide sequence ID" value="NC_000918.1"/>
</dbReference>
<dbReference type="RefSeq" id="WP_010881031.1">
    <property type="nucleotide sequence ID" value="NC_000918.1"/>
</dbReference>
<dbReference type="PDB" id="3ZTO">
    <property type="method" value="X-ray"/>
    <property type="resolution" value="1.47 A"/>
    <property type="chains" value="A=1-142"/>
</dbReference>
<dbReference type="PDB" id="3ZTP">
    <property type="method" value="X-ray"/>
    <property type="resolution" value="1.37 A"/>
    <property type="chains" value="A/C=1-142"/>
</dbReference>
<dbReference type="PDB" id="3ZTQ">
    <property type="method" value="X-ray"/>
    <property type="resolution" value="2.10 A"/>
    <property type="chains" value="A/B/C/D/E/F/G/H=1-142"/>
</dbReference>
<dbReference type="PDB" id="3ZTR">
    <property type="method" value="X-ray"/>
    <property type="resolution" value="2.30 A"/>
    <property type="chains" value="A/B/C/D/E/F/G/H/I/J/K/L=1-142"/>
</dbReference>
<dbReference type="PDB" id="3ZTS">
    <property type="method" value="X-ray"/>
    <property type="resolution" value="2.30 A"/>
    <property type="chains" value="A/B/C/D/E/F/G/H/I/J/K/L=1-142"/>
</dbReference>
<dbReference type="PDBsum" id="3ZTO"/>
<dbReference type="PDBsum" id="3ZTP"/>
<dbReference type="PDBsum" id="3ZTQ"/>
<dbReference type="PDBsum" id="3ZTR"/>
<dbReference type="PDBsum" id="3ZTS"/>
<dbReference type="SMR" id="O67528"/>
<dbReference type="FunCoup" id="O67528">
    <property type="interactions" value="428"/>
</dbReference>
<dbReference type="STRING" id="224324.aq_1590"/>
<dbReference type="EnsemblBacteria" id="AAC07481">
    <property type="protein sequence ID" value="AAC07481"/>
    <property type="gene ID" value="aq_1590"/>
</dbReference>
<dbReference type="KEGG" id="aae:aq_1590"/>
<dbReference type="PATRIC" id="fig|224324.8.peg.1227"/>
<dbReference type="eggNOG" id="COG0105">
    <property type="taxonomic scope" value="Bacteria"/>
</dbReference>
<dbReference type="HOGENOM" id="CLU_060216_8_1_0"/>
<dbReference type="InParanoid" id="O67528"/>
<dbReference type="OrthoDB" id="9801161at2"/>
<dbReference type="EvolutionaryTrace" id="O67528"/>
<dbReference type="Proteomes" id="UP000000798">
    <property type="component" value="Chromosome"/>
</dbReference>
<dbReference type="GO" id="GO:0005737">
    <property type="term" value="C:cytoplasm"/>
    <property type="evidence" value="ECO:0007669"/>
    <property type="project" value="UniProtKB-SubCell"/>
</dbReference>
<dbReference type="GO" id="GO:0005524">
    <property type="term" value="F:ATP binding"/>
    <property type="evidence" value="ECO:0007669"/>
    <property type="project" value="UniProtKB-UniRule"/>
</dbReference>
<dbReference type="GO" id="GO:0046872">
    <property type="term" value="F:metal ion binding"/>
    <property type="evidence" value="ECO:0007669"/>
    <property type="project" value="UniProtKB-KW"/>
</dbReference>
<dbReference type="GO" id="GO:0004550">
    <property type="term" value="F:nucleoside diphosphate kinase activity"/>
    <property type="evidence" value="ECO:0007669"/>
    <property type="project" value="UniProtKB-UniRule"/>
</dbReference>
<dbReference type="GO" id="GO:0006241">
    <property type="term" value="P:CTP biosynthetic process"/>
    <property type="evidence" value="ECO:0007669"/>
    <property type="project" value="UniProtKB-UniRule"/>
</dbReference>
<dbReference type="GO" id="GO:0006183">
    <property type="term" value="P:GTP biosynthetic process"/>
    <property type="evidence" value="ECO:0007669"/>
    <property type="project" value="UniProtKB-UniRule"/>
</dbReference>
<dbReference type="GO" id="GO:0006163">
    <property type="term" value="P:purine nucleotide metabolic process"/>
    <property type="evidence" value="ECO:0000318"/>
    <property type="project" value="GO_Central"/>
</dbReference>
<dbReference type="GO" id="GO:0006220">
    <property type="term" value="P:pyrimidine nucleotide metabolic process"/>
    <property type="evidence" value="ECO:0000318"/>
    <property type="project" value="GO_Central"/>
</dbReference>
<dbReference type="GO" id="GO:0006228">
    <property type="term" value="P:UTP biosynthetic process"/>
    <property type="evidence" value="ECO:0007669"/>
    <property type="project" value="UniProtKB-UniRule"/>
</dbReference>
<dbReference type="CDD" id="cd04413">
    <property type="entry name" value="NDPk_I"/>
    <property type="match status" value="1"/>
</dbReference>
<dbReference type="FunFam" id="3.30.70.141:FF:000043">
    <property type="entry name" value="Nucleoside diphosphate kinase"/>
    <property type="match status" value="1"/>
</dbReference>
<dbReference type="Gene3D" id="3.30.70.141">
    <property type="entry name" value="Nucleoside diphosphate kinase-like domain"/>
    <property type="match status" value="1"/>
</dbReference>
<dbReference type="HAMAP" id="MF_00451">
    <property type="entry name" value="NDP_kinase"/>
    <property type="match status" value="1"/>
</dbReference>
<dbReference type="InterPro" id="IPR034907">
    <property type="entry name" value="NDK-like_dom"/>
</dbReference>
<dbReference type="InterPro" id="IPR036850">
    <property type="entry name" value="NDK-like_dom_sf"/>
</dbReference>
<dbReference type="InterPro" id="IPR001564">
    <property type="entry name" value="Nucleoside_diP_kinase"/>
</dbReference>
<dbReference type="InterPro" id="IPR023005">
    <property type="entry name" value="Nucleoside_diP_kinase_AS"/>
</dbReference>
<dbReference type="NCBIfam" id="NF001908">
    <property type="entry name" value="PRK00668.1"/>
    <property type="match status" value="1"/>
</dbReference>
<dbReference type="PANTHER" id="PTHR46161">
    <property type="entry name" value="NUCLEOSIDE DIPHOSPHATE KINASE"/>
    <property type="match status" value="1"/>
</dbReference>
<dbReference type="PANTHER" id="PTHR46161:SF3">
    <property type="entry name" value="NUCLEOSIDE DIPHOSPHATE KINASE DDB_G0292928-RELATED"/>
    <property type="match status" value="1"/>
</dbReference>
<dbReference type="Pfam" id="PF00334">
    <property type="entry name" value="NDK"/>
    <property type="match status" value="1"/>
</dbReference>
<dbReference type="PRINTS" id="PR01243">
    <property type="entry name" value="NUCDPKINASE"/>
</dbReference>
<dbReference type="SMART" id="SM00562">
    <property type="entry name" value="NDK"/>
    <property type="match status" value="1"/>
</dbReference>
<dbReference type="SUPFAM" id="SSF54919">
    <property type="entry name" value="Nucleoside diphosphate kinase, NDK"/>
    <property type="match status" value="1"/>
</dbReference>
<dbReference type="PROSITE" id="PS00469">
    <property type="entry name" value="NDPK"/>
    <property type="match status" value="1"/>
</dbReference>
<dbReference type="PROSITE" id="PS51374">
    <property type="entry name" value="NDPK_LIKE"/>
    <property type="match status" value="1"/>
</dbReference>
<evidence type="ECO:0000255" key="1">
    <source>
        <dbReference type="HAMAP-Rule" id="MF_00451"/>
    </source>
</evidence>
<evidence type="ECO:0000305" key="2"/>
<evidence type="ECO:0007829" key="3">
    <source>
        <dbReference type="PDB" id="3ZTP"/>
    </source>
</evidence>
<sequence length="142" mass="15942">MAVERTLIIVKPDAMEKGALGKILDRFIQEGFQIKALKMFRFTPEKAGEFYYVHRERPFFQELVEFMSSGPVVAAVLEGEDAIKRVREIIGPTDSEEARKVAPNSIRAQFGTDKGKNAIHASDSPESAQYEICFIFSGLEIV</sequence>
<keyword id="KW-0002">3D-structure</keyword>
<keyword id="KW-0067">ATP-binding</keyword>
<keyword id="KW-0963">Cytoplasm</keyword>
<keyword id="KW-0418">Kinase</keyword>
<keyword id="KW-0460">Magnesium</keyword>
<keyword id="KW-0479">Metal-binding</keyword>
<keyword id="KW-0546">Nucleotide metabolism</keyword>
<keyword id="KW-0547">Nucleotide-binding</keyword>
<keyword id="KW-0597">Phosphoprotein</keyword>
<keyword id="KW-1185">Reference proteome</keyword>
<keyword id="KW-0808">Transferase</keyword>